<keyword id="KW-0067">ATP-binding</keyword>
<keyword id="KW-0436">Ligase</keyword>
<keyword id="KW-0547">Nucleotide-binding</keyword>
<gene>
    <name type="primary">ybdK</name>
    <name type="ordered locus">ECUMN_0671</name>
</gene>
<evidence type="ECO:0000255" key="1">
    <source>
        <dbReference type="HAMAP-Rule" id="MF_01609"/>
    </source>
</evidence>
<protein>
    <recommendedName>
        <fullName evidence="1">Putative glutamate--cysteine ligase 2</fullName>
        <ecNumber evidence="1">6.3.2.2</ecNumber>
    </recommendedName>
    <alternativeName>
        <fullName evidence="1">Gamma-glutamylcysteine synthetase 2</fullName>
        <shortName evidence="1">GCS 2</shortName>
        <shortName evidence="1">Gamma-GCS 2</shortName>
    </alternativeName>
</protein>
<name>GCS2_ECOLU</name>
<sequence>MPLPDFHVSEPFTLGIELEMQVVNPPGYDLSQDSSMLIDAVKNKITAGEVKHDITESMLELATDVCRDINQAAGQFSAMQKVVLQAAADHHLEICGGGTHPFQKWQRQEVCDNERYQRTLENFGYLIQQATVFGQHVHVGCASGDDAIYLLHGLSRFVPHFIALSAASPYMQGTDTRFASSRPNIFSAFPDNGPMPWVSNWQQFEALFRCLSYTTMIDSIKDLHWDIRPSPHFGTVEVRVMDTPLTLSHAVNMAGLIQATAHWLLTERPFKHQEKDYLLYKFNRFQACRYGLEGVITDPHTGDRRSLTEDTLRLLEKIAPSAHKIGASSAIEALHRQVVSGLNEAQLMRDFVADGGSLIGLVKKHCEIWTGE</sequence>
<accession>B7N9I5</accession>
<comment type="function">
    <text evidence="1">ATP-dependent carboxylate-amine ligase which exhibits weak glutamate--cysteine ligase activity.</text>
</comment>
<comment type="catalytic activity">
    <reaction evidence="1">
        <text>L-cysteine + L-glutamate + ATP = gamma-L-glutamyl-L-cysteine + ADP + phosphate + H(+)</text>
        <dbReference type="Rhea" id="RHEA:13285"/>
        <dbReference type="ChEBI" id="CHEBI:15378"/>
        <dbReference type="ChEBI" id="CHEBI:29985"/>
        <dbReference type="ChEBI" id="CHEBI:30616"/>
        <dbReference type="ChEBI" id="CHEBI:35235"/>
        <dbReference type="ChEBI" id="CHEBI:43474"/>
        <dbReference type="ChEBI" id="CHEBI:58173"/>
        <dbReference type="ChEBI" id="CHEBI:456216"/>
        <dbReference type="EC" id="6.3.2.2"/>
    </reaction>
</comment>
<comment type="subunit">
    <text evidence="1">Homodimer.</text>
</comment>
<comment type="similarity">
    <text evidence="1">Belongs to the glutamate--cysteine ligase type 2 family. YbdK subfamily.</text>
</comment>
<feature type="chain" id="PRO_1000148217" description="Putative glutamate--cysteine ligase 2">
    <location>
        <begin position="1"/>
        <end position="372"/>
    </location>
</feature>
<dbReference type="EC" id="6.3.2.2" evidence="1"/>
<dbReference type="EMBL" id="CU928163">
    <property type="protein sequence ID" value="CAR11886.1"/>
    <property type="molecule type" value="Genomic_DNA"/>
</dbReference>
<dbReference type="RefSeq" id="WP_001130641.1">
    <property type="nucleotide sequence ID" value="NC_011751.1"/>
</dbReference>
<dbReference type="RefSeq" id="YP_002411432.1">
    <property type="nucleotide sequence ID" value="NC_011751.1"/>
</dbReference>
<dbReference type="SMR" id="B7N9I5"/>
<dbReference type="STRING" id="585056.ECUMN_0671"/>
<dbReference type="KEGG" id="eum:ECUMN_0671"/>
<dbReference type="PATRIC" id="fig|585056.7.peg.868"/>
<dbReference type="HOGENOM" id="CLU_044848_1_1_6"/>
<dbReference type="Proteomes" id="UP000007097">
    <property type="component" value="Chromosome"/>
</dbReference>
<dbReference type="GO" id="GO:0005524">
    <property type="term" value="F:ATP binding"/>
    <property type="evidence" value="ECO:0007669"/>
    <property type="project" value="UniProtKB-KW"/>
</dbReference>
<dbReference type="GO" id="GO:0004357">
    <property type="term" value="F:glutamate-cysteine ligase activity"/>
    <property type="evidence" value="ECO:0007669"/>
    <property type="project" value="UniProtKB-EC"/>
</dbReference>
<dbReference type="GO" id="GO:0042398">
    <property type="term" value="P:modified amino acid biosynthetic process"/>
    <property type="evidence" value="ECO:0007669"/>
    <property type="project" value="InterPro"/>
</dbReference>
<dbReference type="FunFam" id="3.30.590.20:FF:000002">
    <property type="entry name" value="Putative glutamate--cysteine ligase 2"/>
    <property type="match status" value="1"/>
</dbReference>
<dbReference type="Gene3D" id="3.30.590.20">
    <property type="match status" value="1"/>
</dbReference>
<dbReference type="HAMAP" id="MF_01609">
    <property type="entry name" value="Glu_cys_ligase_2"/>
    <property type="match status" value="1"/>
</dbReference>
<dbReference type="InterPro" id="IPR050141">
    <property type="entry name" value="GCL_type2/YbdK_subfam"/>
</dbReference>
<dbReference type="InterPro" id="IPR006336">
    <property type="entry name" value="GCS2"/>
</dbReference>
<dbReference type="InterPro" id="IPR014746">
    <property type="entry name" value="Gln_synth/guanido_kin_cat_dom"/>
</dbReference>
<dbReference type="InterPro" id="IPR011793">
    <property type="entry name" value="YbdK"/>
</dbReference>
<dbReference type="NCBIfam" id="TIGR02050">
    <property type="entry name" value="gshA_cyan_rel"/>
    <property type="match status" value="1"/>
</dbReference>
<dbReference type="NCBIfam" id="NF010040">
    <property type="entry name" value="PRK13516.1"/>
    <property type="match status" value="1"/>
</dbReference>
<dbReference type="PANTHER" id="PTHR36510">
    <property type="entry name" value="GLUTAMATE--CYSTEINE LIGASE 2-RELATED"/>
    <property type="match status" value="1"/>
</dbReference>
<dbReference type="PANTHER" id="PTHR36510:SF1">
    <property type="entry name" value="GLUTAMATE--CYSTEINE LIGASE 2-RELATED"/>
    <property type="match status" value="1"/>
</dbReference>
<dbReference type="Pfam" id="PF04107">
    <property type="entry name" value="GCS2"/>
    <property type="match status" value="1"/>
</dbReference>
<dbReference type="SUPFAM" id="SSF55931">
    <property type="entry name" value="Glutamine synthetase/guanido kinase"/>
    <property type="match status" value="1"/>
</dbReference>
<organism>
    <name type="scientific">Escherichia coli O17:K52:H18 (strain UMN026 / ExPEC)</name>
    <dbReference type="NCBI Taxonomy" id="585056"/>
    <lineage>
        <taxon>Bacteria</taxon>
        <taxon>Pseudomonadati</taxon>
        <taxon>Pseudomonadota</taxon>
        <taxon>Gammaproteobacteria</taxon>
        <taxon>Enterobacterales</taxon>
        <taxon>Enterobacteriaceae</taxon>
        <taxon>Escherichia</taxon>
    </lineage>
</organism>
<reference key="1">
    <citation type="journal article" date="2009" name="PLoS Genet.">
        <title>Organised genome dynamics in the Escherichia coli species results in highly diverse adaptive paths.</title>
        <authorList>
            <person name="Touchon M."/>
            <person name="Hoede C."/>
            <person name="Tenaillon O."/>
            <person name="Barbe V."/>
            <person name="Baeriswyl S."/>
            <person name="Bidet P."/>
            <person name="Bingen E."/>
            <person name="Bonacorsi S."/>
            <person name="Bouchier C."/>
            <person name="Bouvet O."/>
            <person name="Calteau A."/>
            <person name="Chiapello H."/>
            <person name="Clermont O."/>
            <person name="Cruveiller S."/>
            <person name="Danchin A."/>
            <person name="Diard M."/>
            <person name="Dossat C."/>
            <person name="Karoui M.E."/>
            <person name="Frapy E."/>
            <person name="Garry L."/>
            <person name="Ghigo J.M."/>
            <person name="Gilles A.M."/>
            <person name="Johnson J."/>
            <person name="Le Bouguenec C."/>
            <person name="Lescat M."/>
            <person name="Mangenot S."/>
            <person name="Martinez-Jehanne V."/>
            <person name="Matic I."/>
            <person name="Nassif X."/>
            <person name="Oztas S."/>
            <person name="Petit M.A."/>
            <person name="Pichon C."/>
            <person name="Rouy Z."/>
            <person name="Ruf C.S."/>
            <person name="Schneider D."/>
            <person name="Tourret J."/>
            <person name="Vacherie B."/>
            <person name="Vallenet D."/>
            <person name="Medigue C."/>
            <person name="Rocha E.P.C."/>
            <person name="Denamur E."/>
        </authorList>
    </citation>
    <scope>NUCLEOTIDE SEQUENCE [LARGE SCALE GENOMIC DNA]</scope>
    <source>
        <strain>UMN026 / ExPEC</strain>
    </source>
</reference>
<proteinExistence type="inferred from homology"/>